<keyword id="KW-0010">Activator</keyword>
<keyword id="KW-0012">Acyltransferase</keyword>
<keyword id="KW-0103">Bromodomain</keyword>
<keyword id="KW-0156">Chromatin regulator</keyword>
<keyword id="KW-0539">Nucleus</keyword>
<keyword id="KW-1185">Reference proteome</keyword>
<keyword id="KW-0804">Transcription</keyword>
<keyword id="KW-0805">Transcription regulation</keyword>
<keyword id="KW-0808">Transferase</keyword>
<sequence length="455" mass="52412">MVDRKRNSSVISDNEENGRVDKKTKIKDEIEGDEVERDVKNEEANGADTDDKEEVRKDNEEENAENGGGEGDDDDDDDDEAEEEKKRTTTFNFDGVTYSFKERPSVLEEKEGKIEFRVVNNDNTKESLMVLTGLKNIFQKQLPKMPREYISRLVYDRSHLSMAVVRKPLTVVGGITYRPFDNREFAEIVFCAISSTEQVRGYGAHLMNHLKDYCRATSNVKYFLTYADNYAIGYFKKQGFNKEITLDKSVWMGYIKDYEGGTLMQCSMLPPILRYLDSAKILLLQKAAIEKKIKLRSKAHVVRPGLQVFKTNKDAKLNPAKDIPGLAESGWSEEMDKLAQKPKRGPHYNFMVTLLSELTNHPSAWPFSTPVNKEEVGDYYDVIKEPMDLSTMESKLENDKYDSFDQFLYDARLIFNNCRSYNADSTTYFKNATKLEKFMNNKIKDSAEYSHFLDQ</sequence>
<gene>
    <name type="primary">GCN5</name>
    <name type="ordered locus">DEHA2G23474g</name>
</gene>
<protein>
    <recommendedName>
        <fullName evidence="7">Histone acetyltransferase GCN5</fullName>
        <ecNumber evidence="2">2.3.1.48</ecNumber>
    </recommendedName>
    <alternativeName>
        <fullName evidence="7">Histone crotonyltransferase GCN5</fullName>
        <ecNumber evidence="2">2.3.1.-</ecNumber>
    </alternativeName>
</protein>
<feature type="chain" id="PRO_0000211197" description="Histone acetyltransferase GCN5">
    <location>
        <begin position="1"/>
        <end position="455"/>
    </location>
</feature>
<feature type="domain" description="N-acetyltransferase" evidence="5">
    <location>
        <begin position="114"/>
        <end position="269"/>
    </location>
</feature>
<feature type="domain" description="Bromo" evidence="4">
    <location>
        <begin position="342"/>
        <end position="446"/>
    </location>
</feature>
<feature type="region of interest" description="Disordered" evidence="6">
    <location>
        <begin position="1"/>
        <end position="88"/>
    </location>
</feature>
<feature type="compositionally biased region" description="Basic and acidic residues" evidence="6">
    <location>
        <begin position="16"/>
        <end position="29"/>
    </location>
</feature>
<feature type="compositionally biased region" description="Acidic residues" evidence="6">
    <location>
        <begin position="60"/>
        <end position="82"/>
    </location>
</feature>
<feature type="active site" description="Proton donor/acceptor" evidence="3">
    <location>
        <position position="187"/>
    </location>
</feature>
<feature type="binding site" evidence="3">
    <location>
        <begin position="191"/>
        <end position="193"/>
    </location>
    <ligand>
        <name>acetyl-CoA</name>
        <dbReference type="ChEBI" id="CHEBI:57288"/>
    </ligand>
</feature>
<feature type="binding site" evidence="3">
    <location>
        <begin position="198"/>
        <end position="204"/>
    </location>
    <ligand>
        <name>acetyl-CoA</name>
        <dbReference type="ChEBI" id="CHEBI:57288"/>
    </ligand>
</feature>
<feature type="binding site" evidence="3">
    <location>
        <begin position="230"/>
        <end position="233"/>
    </location>
    <ligand>
        <name>acetyl-CoA</name>
        <dbReference type="ChEBI" id="CHEBI:57288"/>
    </ligand>
</feature>
<feature type="site" description="Important for catalytic activity" evidence="1">
    <location>
        <position position="187"/>
    </location>
</feature>
<evidence type="ECO:0000250" key="1"/>
<evidence type="ECO:0000250" key="2">
    <source>
        <dbReference type="UniProtKB" id="Q03330"/>
    </source>
</evidence>
<evidence type="ECO:0000250" key="3">
    <source>
        <dbReference type="UniProtKB" id="Q92830"/>
    </source>
</evidence>
<evidence type="ECO:0000255" key="4">
    <source>
        <dbReference type="PROSITE-ProRule" id="PRU00035"/>
    </source>
</evidence>
<evidence type="ECO:0000255" key="5">
    <source>
        <dbReference type="PROSITE-ProRule" id="PRU00532"/>
    </source>
</evidence>
<evidence type="ECO:0000256" key="6">
    <source>
        <dbReference type="SAM" id="MobiDB-lite"/>
    </source>
</evidence>
<evidence type="ECO:0000305" key="7"/>
<comment type="function">
    <text evidence="2">Histone acetyltransferase that acetylates histone H2B to form H2BK11ac and H2BK16ac, histone H3 to form H3K14ac, with a lower preference histone H4 to form H4K8ac and H4K16ac, and contributes to H2A.Z acetylation. Acetylation of histones gives a specific tag for epigenetic transcription activation. In addition to histone acetyltransferase, can use different acyl-CoA substrates, such as (2E)-butenoyl-CoA (crotonyl-CoA) and is able to mediate histone crotonylation.</text>
</comment>
<comment type="catalytic activity">
    <reaction evidence="2">
        <text>L-lysyl-[protein] + acetyl-CoA = N(6)-acetyl-L-lysyl-[protein] + CoA + H(+)</text>
        <dbReference type="Rhea" id="RHEA:45948"/>
        <dbReference type="Rhea" id="RHEA-COMP:9752"/>
        <dbReference type="Rhea" id="RHEA-COMP:10731"/>
        <dbReference type="ChEBI" id="CHEBI:15378"/>
        <dbReference type="ChEBI" id="CHEBI:29969"/>
        <dbReference type="ChEBI" id="CHEBI:57287"/>
        <dbReference type="ChEBI" id="CHEBI:57288"/>
        <dbReference type="ChEBI" id="CHEBI:61930"/>
        <dbReference type="EC" id="2.3.1.48"/>
    </reaction>
</comment>
<comment type="catalytic activity">
    <reaction evidence="2">
        <text>(2E)-butenoyl-CoA + L-lysyl-[protein] = N(6)-(2E)-butenoyl-L-lysyl-[protein] + CoA + H(+)</text>
        <dbReference type="Rhea" id="RHEA:53908"/>
        <dbReference type="Rhea" id="RHEA-COMP:9752"/>
        <dbReference type="Rhea" id="RHEA-COMP:13707"/>
        <dbReference type="ChEBI" id="CHEBI:15378"/>
        <dbReference type="ChEBI" id="CHEBI:29969"/>
        <dbReference type="ChEBI" id="CHEBI:57287"/>
        <dbReference type="ChEBI" id="CHEBI:57332"/>
        <dbReference type="ChEBI" id="CHEBI:137954"/>
    </reaction>
</comment>
<comment type="subcellular location">
    <subcellularLocation>
        <location evidence="7">Nucleus</location>
    </subcellularLocation>
</comment>
<comment type="similarity">
    <text evidence="7">Belongs to the acetyltransferase family. GCN5 subfamily.</text>
</comment>
<organism>
    <name type="scientific">Debaryomyces hansenii (strain ATCC 36239 / CBS 767 / BCRC 21394 / JCM 1990 / NBRC 0083 / IGC 2968)</name>
    <name type="common">Yeast</name>
    <name type="synonym">Torulaspora hansenii</name>
    <dbReference type="NCBI Taxonomy" id="284592"/>
    <lineage>
        <taxon>Eukaryota</taxon>
        <taxon>Fungi</taxon>
        <taxon>Dikarya</taxon>
        <taxon>Ascomycota</taxon>
        <taxon>Saccharomycotina</taxon>
        <taxon>Pichiomycetes</taxon>
        <taxon>Debaryomycetaceae</taxon>
        <taxon>Debaryomyces</taxon>
    </lineage>
</organism>
<proteinExistence type="inferred from homology"/>
<name>GCN5_DEBHA</name>
<reference key="1">
    <citation type="journal article" date="2004" name="Nature">
        <title>Genome evolution in yeasts.</title>
        <authorList>
            <person name="Dujon B."/>
            <person name="Sherman D."/>
            <person name="Fischer G."/>
            <person name="Durrens P."/>
            <person name="Casaregola S."/>
            <person name="Lafontaine I."/>
            <person name="de Montigny J."/>
            <person name="Marck C."/>
            <person name="Neuveglise C."/>
            <person name="Talla E."/>
            <person name="Goffard N."/>
            <person name="Frangeul L."/>
            <person name="Aigle M."/>
            <person name="Anthouard V."/>
            <person name="Babour A."/>
            <person name="Barbe V."/>
            <person name="Barnay S."/>
            <person name="Blanchin S."/>
            <person name="Beckerich J.-M."/>
            <person name="Beyne E."/>
            <person name="Bleykasten C."/>
            <person name="Boisrame A."/>
            <person name="Boyer J."/>
            <person name="Cattolico L."/>
            <person name="Confanioleri F."/>
            <person name="de Daruvar A."/>
            <person name="Despons L."/>
            <person name="Fabre E."/>
            <person name="Fairhead C."/>
            <person name="Ferry-Dumazet H."/>
            <person name="Groppi A."/>
            <person name="Hantraye F."/>
            <person name="Hennequin C."/>
            <person name="Jauniaux N."/>
            <person name="Joyet P."/>
            <person name="Kachouri R."/>
            <person name="Kerrest A."/>
            <person name="Koszul R."/>
            <person name="Lemaire M."/>
            <person name="Lesur I."/>
            <person name="Ma L."/>
            <person name="Muller H."/>
            <person name="Nicaud J.-M."/>
            <person name="Nikolski M."/>
            <person name="Oztas S."/>
            <person name="Ozier-Kalogeropoulos O."/>
            <person name="Pellenz S."/>
            <person name="Potier S."/>
            <person name="Richard G.-F."/>
            <person name="Straub M.-L."/>
            <person name="Suleau A."/>
            <person name="Swennen D."/>
            <person name="Tekaia F."/>
            <person name="Wesolowski-Louvel M."/>
            <person name="Westhof E."/>
            <person name="Wirth B."/>
            <person name="Zeniou-Meyer M."/>
            <person name="Zivanovic Y."/>
            <person name="Bolotin-Fukuhara M."/>
            <person name="Thierry A."/>
            <person name="Bouchier C."/>
            <person name="Caudron B."/>
            <person name="Scarpelli C."/>
            <person name="Gaillardin C."/>
            <person name="Weissenbach J."/>
            <person name="Wincker P."/>
            <person name="Souciet J.-L."/>
        </authorList>
    </citation>
    <scope>NUCLEOTIDE SEQUENCE [LARGE SCALE GENOMIC DNA]</scope>
    <source>
        <strain>ATCC 36239 / CBS 767 / BCRC 21394 / JCM 1990 / NBRC 0083 / IGC 2968</strain>
    </source>
</reference>
<dbReference type="EC" id="2.3.1.48" evidence="2"/>
<dbReference type="EC" id="2.3.1.-" evidence="2"/>
<dbReference type="EMBL" id="CR382139">
    <property type="protein sequence ID" value="CAG91071.2"/>
    <property type="molecule type" value="Genomic_DNA"/>
</dbReference>
<dbReference type="RefSeq" id="XP_462560.2">
    <property type="nucleotide sequence ID" value="XM_462560.1"/>
</dbReference>
<dbReference type="SMR" id="Q6BGW1"/>
<dbReference type="FunCoup" id="Q6BGW1">
    <property type="interactions" value="536"/>
</dbReference>
<dbReference type="STRING" id="284592.Q6BGW1"/>
<dbReference type="GeneID" id="2905516"/>
<dbReference type="KEGG" id="dha:DEHA2G23474g"/>
<dbReference type="eggNOG" id="KOG1472">
    <property type="taxonomic scope" value="Eukaryota"/>
</dbReference>
<dbReference type="HOGENOM" id="CLU_015741_2_0_1"/>
<dbReference type="InParanoid" id="Q6BGW1"/>
<dbReference type="OMA" id="HQPPKEW"/>
<dbReference type="OrthoDB" id="1937912at2759"/>
<dbReference type="Proteomes" id="UP000000599">
    <property type="component" value="Chromosome G"/>
</dbReference>
<dbReference type="GO" id="GO:0005634">
    <property type="term" value="C:nucleus"/>
    <property type="evidence" value="ECO:0007669"/>
    <property type="project" value="UniProtKB-SubCell"/>
</dbReference>
<dbReference type="GO" id="GO:0000124">
    <property type="term" value="C:SAGA complex"/>
    <property type="evidence" value="ECO:0007669"/>
    <property type="project" value="EnsemblFungi"/>
</dbReference>
<dbReference type="GO" id="GO:0036408">
    <property type="term" value="F:histone H3K14 acetyltransferase activity"/>
    <property type="evidence" value="ECO:0007669"/>
    <property type="project" value="EnsemblFungi"/>
</dbReference>
<dbReference type="GO" id="GO:0043993">
    <property type="term" value="F:histone H3K18 acetyltransferase activity"/>
    <property type="evidence" value="ECO:0007669"/>
    <property type="project" value="EnsemblFungi"/>
</dbReference>
<dbReference type="GO" id="GO:0043992">
    <property type="term" value="F:histone H3K9 acetyltransferase activity"/>
    <property type="evidence" value="ECO:0007669"/>
    <property type="project" value="EnsemblFungi"/>
</dbReference>
<dbReference type="GO" id="GO:0140064">
    <property type="term" value="F:peptide crotonyltransferase activity"/>
    <property type="evidence" value="ECO:0007669"/>
    <property type="project" value="RHEA"/>
</dbReference>
<dbReference type="GO" id="GO:0010515">
    <property type="term" value="P:negative regulation of induction of conjugation with cellular fusion"/>
    <property type="evidence" value="ECO:0007669"/>
    <property type="project" value="EnsemblFungi"/>
</dbReference>
<dbReference type="GO" id="GO:0045944">
    <property type="term" value="P:positive regulation of transcription by RNA polymerase II"/>
    <property type="evidence" value="ECO:0007669"/>
    <property type="project" value="TreeGrafter"/>
</dbReference>
<dbReference type="GO" id="GO:0045815">
    <property type="term" value="P:transcription initiation-coupled chromatin remodeling"/>
    <property type="evidence" value="ECO:0007669"/>
    <property type="project" value="EnsemblFungi"/>
</dbReference>
<dbReference type="CDD" id="cd05509">
    <property type="entry name" value="Bromo_gcn5_like"/>
    <property type="match status" value="1"/>
</dbReference>
<dbReference type="CDD" id="cd04301">
    <property type="entry name" value="NAT_SF"/>
    <property type="match status" value="1"/>
</dbReference>
<dbReference type="FunFam" id="1.20.920.10:FF:000046">
    <property type="entry name" value="Histone acetyltransferase GCN5"/>
    <property type="match status" value="1"/>
</dbReference>
<dbReference type="FunFam" id="3.40.630.30:FF:000004">
    <property type="entry name" value="Histone acetyltransferase KAT2A"/>
    <property type="match status" value="1"/>
</dbReference>
<dbReference type="Gene3D" id="3.40.630.30">
    <property type="match status" value="1"/>
</dbReference>
<dbReference type="Gene3D" id="1.20.920.10">
    <property type="entry name" value="Bromodomain-like"/>
    <property type="match status" value="1"/>
</dbReference>
<dbReference type="InterPro" id="IPR016181">
    <property type="entry name" value="Acyl_CoA_acyltransferase"/>
</dbReference>
<dbReference type="InterPro" id="IPR001487">
    <property type="entry name" value="Bromodomain"/>
</dbReference>
<dbReference type="InterPro" id="IPR036427">
    <property type="entry name" value="Bromodomain-like_sf"/>
</dbReference>
<dbReference type="InterPro" id="IPR018359">
    <property type="entry name" value="Bromodomain_CS"/>
</dbReference>
<dbReference type="InterPro" id="IPR037800">
    <property type="entry name" value="GCN5"/>
</dbReference>
<dbReference type="InterPro" id="IPR000182">
    <property type="entry name" value="GNAT_dom"/>
</dbReference>
<dbReference type="PANTHER" id="PTHR45750">
    <property type="entry name" value="GH11602P"/>
    <property type="match status" value="1"/>
</dbReference>
<dbReference type="PANTHER" id="PTHR45750:SF3">
    <property type="entry name" value="HISTONE ACETYLTRANSFERASE"/>
    <property type="match status" value="1"/>
</dbReference>
<dbReference type="Pfam" id="PF00583">
    <property type="entry name" value="Acetyltransf_1"/>
    <property type="match status" value="1"/>
</dbReference>
<dbReference type="Pfam" id="PF00439">
    <property type="entry name" value="Bromodomain"/>
    <property type="match status" value="1"/>
</dbReference>
<dbReference type="PRINTS" id="PR00503">
    <property type="entry name" value="BROMODOMAIN"/>
</dbReference>
<dbReference type="SMART" id="SM00297">
    <property type="entry name" value="BROMO"/>
    <property type="match status" value="1"/>
</dbReference>
<dbReference type="SUPFAM" id="SSF55729">
    <property type="entry name" value="Acyl-CoA N-acyltransferases (Nat)"/>
    <property type="match status" value="1"/>
</dbReference>
<dbReference type="SUPFAM" id="SSF47370">
    <property type="entry name" value="Bromodomain"/>
    <property type="match status" value="1"/>
</dbReference>
<dbReference type="PROSITE" id="PS00633">
    <property type="entry name" value="BROMODOMAIN_1"/>
    <property type="match status" value="1"/>
</dbReference>
<dbReference type="PROSITE" id="PS50014">
    <property type="entry name" value="BROMODOMAIN_2"/>
    <property type="match status" value="1"/>
</dbReference>
<dbReference type="PROSITE" id="PS51186">
    <property type="entry name" value="GNAT"/>
    <property type="match status" value="1"/>
</dbReference>
<accession>Q6BGW1</accession>